<keyword id="KW-0175">Coiled coil</keyword>
<keyword id="KW-0539">Nucleus</keyword>
<keyword id="KW-1185">Reference proteome</keyword>
<protein>
    <recommendedName>
        <fullName>Coiled-coil domain-containing protein 174</fullName>
    </recommendedName>
</protein>
<comment type="function">
    <text evidence="1">Probably involved in neuronal development.</text>
</comment>
<comment type="subcellular location">
    <subcellularLocation>
        <location evidence="1">Nucleus</location>
    </subcellularLocation>
</comment>
<gene>
    <name type="primary">CCDC174</name>
    <name type="ORF">RCJMB04_26a16</name>
</gene>
<dbReference type="EMBL" id="AJ720805">
    <property type="protein sequence ID" value="CAG32464.1"/>
    <property type="molecule type" value="mRNA"/>
</dbReference>
<dbReference type="SMR" id="Q5ZIH9"/>
<dbReference type="FunCoup" id="Q5ZIH9">
    <property type="interactions" value="1616"/>
</dbReference>
<dbReference type="STRING" id="9031.ENSGALP00000010416"/>
<dbReference type="PaxDb" id="9031-ENSGALP00000010416"/>
<dbReference type="VEuPathDB" id="HostDB:geneid_416044"/>
<dbReference type="eggNOG" id="ENOG502QWJ9">
    <property type="taxonomic scope" value="Eukaryota"/>
</dbReference>
<dbReference type="InParanoid" id="Q5ZIH9"/>
<dbReference type="OrthoDB" id="333551at2759"/>
<dbReference type="PhylomeDB" id="Q5ZIH9"/>
<dbReference type="Proteomes" id="UP000000539">
    <property type="component" value="Unassembled WGS sequence"/>
</dbReference>
<dbReference type="GO" id="GO:0005634">
    <property type="term" value="C:nucleus"/>
    <property type="evidence" value="ECO:0000318"/>
    <property type="project" value="GO_Central"/>
</dbReference>
<dbReference type="InterPro" id="IPR025066">
    <property type="entry name" value="CCDC174-like"/>
</dbReference>
<dbReference type="PANTHER" id="PTHR15885">
    <property type="entry name" value="COILED-COIL DOMAIN-CONTAINING PROTEIN 174"/>
    <property type="match status" value="1"/>
</dbReference>
<dbReference type="PANTHER" id="PTHR15885:SF1">
    <property type="entry name" value="COILED-COIL DOMAIN-CONTAINING PROTEIN 174"/>
    <property type="match status" value="1"/>
</dbReference>
<dbReference type="Pfam" id="PF25449">
    <property type="entry name" value="CCDC174_GRSR"/>
    <property type="match status" value="1"/>
</dbReference>
<dbReference type="Pfam" id="PF13300">
    <property type="entry name" value="DUF4078"/>
    <property type="match status" value="1"/>
</dbReference>
<reference key="1">
    <citation type="journal article" date="2005" name="Genome Biol.">
        <title>Full-length cDNAs from chicken bursal lymphocytes to facilitate gene function analysis.</title>
        <authorList>
            <person name="Caldwell R.B."/>
            <person name="Kierzek A.M."/>
            <person name="Arakawa H."/>
            <person name="Bezzubov Y."/>
            <person name="Zaim J."/>
            <person name="Fiedler P."/>
            <person name="Kutter S."/>
            <person name="Blagodatski A."/>
            <person name="Kostovska D."/>
            <person name="Koter M."/>
            <person name="Plachy J."/>
            <person name="Carninci P."/>
            <person name="Hayashizaki Y."/>
            <person name="Buerstedde J.-M."/>
        </authorList>
    </citation>
    <scope>NUCLEOTIDE SEQUENCE [LARGE SCALE MRNA]</scope>
    <source>
        <strain>CB</strain>
        <tissue>Bursa of Fabricius</tissue>
    </source>
</reference>
<name>CC174_CHICK</name>
<sequence>MDRRKKPLDVAASSLVDLKAELFRKQEEFKKEKLLKDAGIFAKPKPSNKKPSIWTKQNTGVAKRAEKDIEQKAEEDQTLDQSRKKLEEKAKLYEKMTKGDFPDEETEDLYLVDFTQKIIDKQREVQELYQNEAAIKTLEKETDDEEIEPEMEIPPPEDPDEEWVDYVDSLGRSRRCMKKDLPSILKMDQELQGKRLDPDGNTLLSEDMKRELQRQQWEKEEEEALRKPMGPIHYEDIRENEARQLGVGYFAFSRDQDLRHKQRATLDMLREQTLDQRTKREQLKEKRKAALESRLSKLRARKVKKLREEGLEEEAERLENGEVKDTTSPVEAEPEVPRPSRKVEVVIQERRDTKPGVPYVREWDKGKELMFGQWSKKQEELRDERDPEFAPPSDYFMGQKKDDGYSSQNLNSPETSPGKTEPEISENQKKLSVQASTHRAEVVPPSVQAYSNNVQGGLAPAEASGSDAEDGSTSAETDSSDEQDGVPSAHPLHLWCSDTCQPSNAGLWLWPLRI</sequence>
<proteinExistence type="evidence at transcript level"/>
<accession>Q5ZIH9</accession>
<evidence type="ECO:0000250" key="1">
    <source>
        <dbReference type="UniProtKB" id="Q6PII3"/>
    </source>
</evidence>
<evidence type="ECO:0000255" key="2"/>
<evidence type="ECO:0000256" key="3">
    <source>
        <dbReference type="SAM" id="MobiDB-lite"/>
    </source>
</evidence>
<organism>
    <name type="scientific">Gallus gallus</name>
    <name type="common">Chicken</name>
    <dbReference type="NCBI Taxonomy" id="9031"/>
    <lineage>
        <taxon>Eukaryota</taxon>
        <taxon>Metazoa</taxon>
        <taxon>Chordata</taxon>
        <taxon>Craniata</taxon>
        <taxon>Vertebrata</taxon>
        <taxon>Euteleostomi</taxon>
        <taxon>Archelosauria</taxon>
        <taxon>Archosauria</taxon>
        <taxon>Dinosauria</taxon>
        <taxon>Saurischia</taxon>
        <taxon>Theropoda</taxon>
        <taxon>Coelurosauria</taxon>
        <taxon>Aves</taxon>
        <taxon>Neognathae</taxon>
        <taxon>Galloanserae</taxon>
        <taxon>Galliformes</taxon>
        <taxon>Phasianidae</taxon>
        <taxon>Phasianinae</taxon>
        <taxon>Gallus</taxon>
    </lineage>
</organism>
<feature type="chain" id="PRO_0000251959" description="Coiled-coil domain-containing protein 174">
    <location>
        <begin position="1"/>
        <end position="514"/>
    </location>
</feature>
<feature type="region of interest" description="Disordered" evidence="3">
    <location>
        <begin position="42"/>
        <end position="83"/>
    </location>
</feature>
<feature type="region of interest" description="Disordered" evidence="3">
    <location>
        <begin position="137"/>
        <end position="162"/>
    </location>
</feature>
<feature type="region of interest" description="Disordered" evidence="3">
    <location>
        <begin position="270"/>
        <end position="291"/>
    </location>
</feature>
<feature type="region of interest" description="Disordered" evidence="3">
    <location>
        <begin position="306"/>
        <end position="490"/>
    </location>
</feature>
<feature type="coiled-coil region" evidence="2">
    <location>
        <begin position="66"/>
        <end position="98"/>
    </location>
</feature>
<feature type="coiled-coil region" evidence="2">
    <location>
        <begin position="203"/>
        <end position="227"/>
    </location>
</feature>
<feature type="coiled-coil region" evidence="2">
    <location>
        <begin position="266"/>
        <end position="321"/>
    </location>
</feature>
<feature type="compositionally biased region" description="Basic and acidic residues" evidence="3">
    <location>
        <begin position="63"/>
        <end position="83"/>
    </location>
</feature>
<feature type="compositionally biased region" description="Acidic residues" evidence="3">
    <location>
        <begin position="141"/>
        <end position="162"/>
    </location>
</feature>
<feature type="compositionally biased region" description="Basic and acidic residues" evidence="3">
    <location>
        <begin position="335"/>
        <end position="354"/>
    </location>
</feature>
<feature type="compositionally biased region" description="Basic and acidic residues" evidence="3">
    <location>
        <begin position="376"/>
        <end position="388"/>
    </location>
</feature>
<feature type="compositionally biased region" description="Polar residues" evidence="3">
    <location>
        <begin position="405"/>
        <end position="418"/>
    </location>
</feature>
<feature type="compositionally biased region" description="Basic and acidic residues" evidence="3">
    <location>
        <begin position="420"/>
        <end position="429"/>
    </location>
</feature>